<dbReference type="EMBL" id="X57760">
    <property type="protein sequence ID" value="CAA40915.1"/>
    <property type="molecule type" value="Genomic_DNA"/>
</dbReference>
<dbReference type="EMBL" id="X57761">
    <property type="protein sequence ID" value="CAA40915.1"/>
    <property type="status" value="JOINED"/>
    <property type="molecule type" value="Genomic_DNA"/>
</dbReference>
<dbReference type="PIR" id="S16417">
    <property type="entry name" value="S16417"/>
</dbReference>
<dbReference type="SMR" id="P46692"/>
<dbReference type="GlyGen" id="P46692">
    <property type="glycosylation" value="2 sites"/>
</dbReference>
<dbReference type="VEuPathDB" id="HostDB:geneid_395397"/>
<dbReference type="InParanoid" id="P46692"/>
<dbReference type="Proteomes" id="UP000000539">
    <property type="component" value="Unassembled WGS sequence"/>
</dbReference>
<dbReference type="GO" id="GO:0005634">
    <property type="term" value="C:nucleus"/>
    <property type="evidence" value="ECO:0000318"/>
    <property type="project" value="GO_Central"/>
</dbReference>
<dbReference type="GO" id="GO:0003700">
    <property type="term" value="F:DNA-binding transcription factor activity"/>
    <property type="evidence" value="ECO:0000318"/>
    <property type="project" value="GO_Central"/>
</dbReference>
<dbReference type="GO" id="GO:0000981">
    <property type="term" value="F:DNA-binding transcription factor activity, RNA polymerase II-specific"/>
    <property type="evidence" value="ECO:0007669"/>
    <property type="project" value="InterPro"/>
</dbReference>
<dbReference type="GO" id="GO:0000977">
    <property type="term" value="F:RNA polymerase II transcription regulatory region sequence-specific DNA binding"/>
    <property type="evidence" value="ECO:0000318"/>
    <property type="project" value="GO_Central"/>
</dbReference>
<dbReference type="GO" id="GO:0009948">
    <property type="term" value="P:anterior/posterior axis specification"/>
    <property type="evidence" value="ECO:0000318"/>
    <property type="project" value="GO_Central"/>
</dbReference>
<dbReference type="GO" id="GO:0030154">
    <property type="term" value="P:cell differentiation"/>
    <property type="evidence" value="ECO:0000318"/>
    <property type="project" value="GO_Central"/>
</dbReference>
<dbReference type="GO" id="GO:0048565">
    <property type="term" value="P:digestive tract development"/>
    <property type="evidence" value="ECO:0000318"/>
    <property type="project" value="GO_Central"/>
</dbReference>
<dbReference type="GO" id="GO:0009880">
    <property type="term" value="P:embryonic pattern specification"/>
    <property type="evidence" value="ECO:0000318"/>
    <property type="project" value="GO_Central"/>
</dbReference>
<dbReference type="GO" id="GO:0006357">
    <property type="term" value="P:regulation of transcription by RNA polymerase II"/>
    <property type="evidence" value="ECO:0000318"/>
    <property type="project" value="GO_Central"/>
</dbReference>
<dbReference type="CDD" id="cd00086">
    <property type="entry name" value="homeodomain"/>
    <property type="match status" value="1"/>
</dbReference>
<dbReference type="FunFam" id="1.10.10.60:FF:000089">
    <property type="entry name" value="Caudal type homeobox 4"/>
    <property type="match status" value="1"/>
</dbReference>
<dbReference type="Gene3D" id="1.10.10.60">
    <property type="entry name" value="Homeodomain-like"/>
    <property type="match status" value="1"/>
</dbReference>
<dbReference type="InterPro" id="IPR006820">
    <property type="entry name" value="Caudal_activation_dom"/>
</dbReference>
<dbReference type="InterPro" id="IPR047152">
    <property type="entry name" value="Caudal_homeobox"/>
</dbReference>
<dbReference type="InterPro" id="IPR001356">
    <property type="entry name" value="HD"/>
</dbReference>
<dbReference type="InterPro" id="IPR020479">
    <property type="entry name" value="HD_metazoa"/>
</dbReference>
<dbReference type="InterPro" id="IPR017970">
    <property type="entry name" value="Homeobox_CS"/>
</dbReference>
<dbReference type="InterPro" id="IPR009057">
    <property type="entry name" value="Homeodomain-like_sf"/>
</dbReference>
<dbReference type="InterPro" id="IPR000047">
    <property type="entry name" value="HTH_motif"/>
</dbReference>
<dbReference type="PANTHER" id="PTHR24332">
    <property type="entry name" value="HOMEOBOX PROTEIN CDX"/>
    <property type="match status" value="1"/>
</dbReference>
<dbReference type="PANTHER" id="PTHR24332:SF16">
    <property type="entry name" value="HOMEOBOX PROTEIN CDX-1"/>
    <property type="match status" value="1"/>
</dbReference>
<dbReference type="Pfam" id="PF04731">
    <property type="entry name" value="Caudal_act"/>
    <property type="match status" value="1"/>
</dbReference>
<dbReference type="Pfam" id="PF00046">
    <property type="entry name" value="Homeodomain"/>
    <property type="match status" value="1"/>
</dbReference>
<dbReference type="PRINTS" id="PR00024">
    <property type="entry name" value="HOMEOBOX"/>
</dbReference>
<dbReference type="PRINTS" id="PR00031">
    <property type="entry name" value="HTHREPRESSR"/>
</dbReference>
<dbReference type="SMART" id="SM00389">
    <property type="entry name" value="HOX"/>
    <property type="match status" value="1"/>
</dbReference>
<dbReference type="SUPFAM" id="SSF46689">
    <property type="entry name" value="Homeodomain-like"/>
    <property type="match status" value="1"/>
</dbReference>
<dbReference type="PROSITE" id="PS00027">
    <property type="entry name" value="HOMEOBOX_1"/>
    <property type="match status" value="1"/>
</dbReference>
<dbReference type="PROSITE" id="PS50071">
    <property type="entry name" value="HOMEOBOX_2"/>
    <property type="match status" value="1"/>
</dbReference>
<comment type="function">
    <text evidence="3">May play an important role during the early steps of organogenesis.</text>
</comment>
<comment type="subcellular location">
    <subcellularLocation>
        <location>Nucleus</location>
    </subcellularLocation>
</comment>
<comment type="similarity">
    <text evidence="4">Belongs to the Caudal homeobox family.</text>
</comment>
<reference key="1">
    <citation type="journal article" date="1991" name="Development">
        <title>A chicken caudal homologue, CHox-cad, is expressed in the epiblast with posterior localization and in the early endodermal lineage.</title>
        <authorList>
            <person name="Frumkin A."/>
            <person name="Rangini Z."/>
            <person name="Ben-Yehuda A."/>
            <person name="Gruenbaum Y."/>
            <person name="Fainsod A."/>
        </authorList>
    </citation>
    <scope>NUCLEOTIDE SEQUENCE [GENOMIC DNA]</scope>
    <source>
        <tissue>Oviduct</tissue>
    </source>
</reference>
<reference key="2">
    <citation type="journal article" date="1993" name="Dev. Biol.">
        <title>Continued expression of the chicken caudal homologue in endodermally derived organs.</title>
        <authorList>
            <person name="Doll U."/>
            <person name="Niessing J."/>
        </authorList>
    </citation>
    <scope>FUNCTION</scope>
    <scope>TISSUE SPECIFICITY</scope>
</reference>
<accession>P46692</accession>
<sequence length="248" mass="27401">MYPSPVRHPGLNLNPQNYVPGPPQYSDFASYHHVPGINNDPHHGQPAAAWGSPYTPAKEDWHSYGTAAASAATNPGQFGFSPPDFNPMQPHAGSGLLPPAISSSVPQLSPNAQRRTPYEWMRRSIPSTSSSGKTRTKDKYRVVYTDHQRLELEKEFHYSRYITIRRKAELAAALGLTERQVKIWFQNRRAKERKVNKKKLQQQSQPTSTTTPTPPAVGTPGPMGTLCSGSAPSLVSSSPLTIKEEFMP</sequence>
<name>HMD1_CHICK</name>
<keyword id="KW-0217">Developmental protein</keyword>
<keyword id="KW-0238">DNA-binding</keyword>
<keyword id="KW-0371">Homeobox</keyword>
<keyword id="KW-0539">Nucleus</keyword>
<keyword id="KW-1185">Reference proteome</keyword>
<feature type="chain" id="PRO_0000049018" description="Homeobox protein CHOX-CAD">
    <location>
        <begin position="1"/>
        <end position="248"/>
    </location>
</feature>
<feature type="DNA-binding region" description="Homeobox" evidence="1">
    <location>
        <begin position="137"/>
        <end position="196"/>
    </location>
</feature>
<feature type="region of interest" description="Disordered" evidence="2">
    <location>
        <begin position="192"/>
        <end position="248"/>
    </location>
</feature>
<feature type="compositionally biased region" description="Low complexity" evidence="2">
    <location>
        <begin position="201"/>
        <end position="211"/>
    </location>
</feature>
<feature type="compositionally biased region" description="Low complexity" evidence="2">
    <location>
        <begin position="228"/>
        <end position="240"/>
    </location>
</feature>
<proteinExistence type="evidence at transcript level"/>
<protein>
    <recommendedName>
        <fullName>Homeobox protein CHOX-CAD</fullName>
    </recommendedName>
</protein>
<organism>
    <name type="scientific">Gallus gallus</name>
    <name type="common">Chicken</name>
    <dbReference type="NCBI Taxonomy" id="9031"/>
    <lineage>
        <taxon>Eukaryota</taxon>
        <taxon>Metazoa</taxon>
        <taxon>Chordata</taxon>
        <taxon>Craniata</taxon>
        <taxon>Vertebrata</taxon>
        <taxon>Euteleostomi</taxon>
        <taxon>Archelosauria</taxon>
        <taxon>Archosauria</taxon>
        <taxon>Dinosauria</taxon>
        <taxon>Saurischia</taxon>
        <taxon>Theropoda</taxon>
        <taxon>Coelurosauria</taxon>
        <taxon>Aves</taxon>
        <taxon>Neognathae</taxon>
        <taxon>Galloanserae</taxon>
        <taxon>Galliformes</taxon>
        <taxon>Phasianidae</taxon>
        <taxon>Phasianinae</taxon>
        <taxon>Gallus</taxon>
    </lineage>
</organism>
<evidence type="ECO:0000255" key="1">
    <source>
        <dbReference type="PROSITE-ProRule" id="PRU00108"/>
    </source>
</evidence>
<evidence type="ECO:0000256" key="2">
    <source>
        <dbReference type="SAM" id="MobiDB-lite"/>
    </source>
</evidence>
<evidence type="ECO:0000269" key="3">
    <source>
    </source>
</evidence>
<evidence type="ECO:0000305" key="4"/>
<gene>
    <name type="primary">CHOX-CAD1</name>
    <name type="synonym">CHOX-CAD</name>
</gene>